<protein>
    <recommendedName>
        <fullName evidence="1">Small ribosomal subunit protein uS15</fullName>
    </recommendedName>
    <alternativeName>
        <fullName evidence="2">30S ribosomal protein S15</fullName>
    </alternativeName>
</protein>
<keyword id="KW-1185">Reference proteome</keyword>
<keyword id="KW-0687">Ribonucleoprotein</keyword>
<keyword id="KW-0689">Ribosomal protein</keyword>
<keyword id="KW-0694">RNA-binding</keyword>
<keyword id="KW-0699">rRNA-binding</keyword>
<organism>
    <name type="scientific">Anaeromyxobacter sp. (strain Fw109-5)</name>
    <dbReference type="NCBI Taxonomy" id="404589"/>
    <lineage>
        <taxon>Bacteria</taxon>
        <taxon>Pseudomonadati</taxon>
        <taxon>Myxococcota</taxon>
        <taxon>Myxococcia</taxon>
        <taxon>Myxococcales</taxon>
        <taxon>Cystobacterineae</taxon>
        <taxon>Anaeromyxobacteraceae</taxon>
        <taxon>Anaeromyxobacter</taxon>
    </lineage>
</organism>
<feature type="chain" id="PRO_1000054745" description="Small ribosomal subunit protein uS15">
    <location>
        <begin position="1"/>
        <end position="89"/>
    </location>
</feature>
<comment type="function">
    <text evidence="1">One of the primary rRNA binding proteins, it binds directly to 16S rRNA where it helps nucleate assembly of the platform of the 30S subunit by binding and bridging several RNA helices of the 16S rRNA.</text>
</comment>
<comment type="function">
    <text evidence="1">Forms an intersubunit bridge (bridge B4) with the 23S rRNA of the 50S subunit in the ribosome.</text>
</comment>
<comment type="subunit">
    <text evidence="1">Part of the 30S ribosomal subunit. Forms a bridge to the 50S subunit in the 70S ribosome, contacting the 23S rRNA.</text>
</comment>
<comment type="similarity">
    <text evidence="1">Belongs to the universal ribosomal protein uS15 family.</text>
</comment>
<gene>
    <name evidence="1" type="primary">rpsO</name>
    <name type="ordered locus">Anae109_1145</name>
</gene>
<proteinExistence type="inferred from homology"/>
<name>RS15_ANADF</name>
<sequence>MALVQERKQELVTKYKRHEKDTGSPEVQVALLTERIAYLTEHFKTHKKDHHSRRGLLKLVGQRRRLLDYLRSIDQGRYKTLIDQLGIRK</sequence>
<dbReference type="EMBL" id="CP000769">
    <property type="protein sequence ID" value="ABS25353.1"/>
    <property type="molecule type" value="Genomic_DNA"/>
</dbReference>
<dbReference type="RefSeq" id="WP_011985459.1">
    <property type="nucleotide sequence ID" value="NC_009675.1"/>
</dbReference>
<dbReference type="SMR" id="A7H9F7"/>
<dbReference type="STRING" id="404589.Anae109_1145"/>
<dbReference type="KEGG" id="afw:Anae109_1145"/>
<dbReference type="eggNOG" id="COG0184">
    <property type="taxonomic scope" value="Bacteria"/>
</dbReference>
<dbReference type="HOGENOM" id="CLU_148518_0_0_7"/>
<dbReference type="OrthoDB" id="9799262at2"/>
<dbReference type="Proteomes" id="UP000006382">
    <property type="component" value="Chromosome"/>
</dbReference>
<dbReference type="GO" id="GO:0022627">
    <property type="term" value="C:cytosolic small ribosomal subunit"/>
    <property type="evidence" value="ECO:0007669"/>
    <property type="project" value="TreeGrafter"/>
</dbReference>
<dbReference type="GO" id="GO:0019843">
    <property type="term" value="F:rRNA binding"/>
    <property type="evidence" value="ECO:0007669"/>
    <property type="project" value="UniProtKB-UniRule"/>
</dbReference>
<dbReference type="GO" id="GO:0003735">
    <property type="term" value="F:structural constituent of ribosome"/>
    <property type="evidence" value="ECO:0007669"/>
    <property type="project" value="InterPro"/>
</dbReference>
<dbReference type="GO" id="GO:0006412">
    <property type="term" value="P:translation"/>
    <property type="evidence" value="ECO:0007669"/>
    <property type="project" value="UniProtKB-UniRule"/>
</dbReference>
<dbReference type="CDD" id="cd00353">
    <property type="entry name" value="Ribosomal_S15p_S13e"/>
    <property type="match status" value="1"/>
</dbReference>
<dbReference type="FunFam" id="1.10.287.10:FF:000002">
    <property type="entry name" value="30S ribosomal protein S15"/>
    <property type="match status" value="1"/>
</dbReference>
<dbReference type="Gene3D" id="6.10.250.3130">
    <property type="match status" value="1"/>
</dbReference>
<dbReference type="Gene3D" id="1.10.287.10">
    <property type="entry name" value="S15/NS1, RNA-binding"/>
    <property type="match status" value="1"/>
</dbReference>
<dbReference type="HAMAP" id="MF_01343_B">
    <property type="entry name" value="Ribosomal_uS15_B"/>
    <property type="match status" value="1"/>
</dbReference>
<dbReference type="InterPro" id="IPR000589">
    <property type="entry name" value="Ribosomal_uS15"/>
</dbReference>
<dbReference type="InterPro" id="IPR005290">
    <property type="entry name" value="Ribosomal_uS15_bac-type"/>
</dbReference>
<dbReference type="InterPro" id="IPR009068">
    <property type="entry name" value="uS15_NS1_RNA-bd_sf"/>
</dbReference>
<dbReference type="NCBIfam" id="TIGR00952">
    <property type="entry name" value="S15_bact"/>
    <property type="match status" value="1"/>
</dbReference>
<dbReference type="PANTHER" id="PTHR23321">
    <property type="entry name" value="RIBOSOMAL PROTEIN S15, BACTERIAL AND ORGANELLAR"/>
    <property type="match status" value="1"/>
</dbReference>
<dbReference type="PANTHER" id="PTHR23321:SF26">
    <property type="entry name" value="SMALL RIBOSOMAL SUBUNIT PROTEIN US15M"/>
    <property type="match status" value="1"/>
</dbReference>
<dbReference type="Pfam" id="PF00312">
    <property type="entry name" value="Ribosomal_S15"/>
    <property type="match status" value="1"/>
</dbReference>
<dbReference type="SMART" id="SM01387">
    <property type="entry name" value="Ribosomal_S15"/>
    <property type="match status" value="1"/>
</dbReference>
<dbReference type="SUPFAM" id="SSF47060">
    <property type="entry name" value="S15/NS1 RNA-binding domain"/>
    <property type="match status" value="1"/>
</dbReference>
<dbReference type="PROSITE" id="PS00362">
    <property type="entry name" value="RIBOSOMAL_S15"/>
    <property type="match status" value="1"/>
</dbReference>
<evidence type="ECO:0000255" key="1">
    <source>
        <dbReference type="HAMAP-Rule" id="MF_01343"/>
    </source>
</evidence>
<evidence type="ECO:0000305" key="2"/>
<reference key="1">
    <citation type="journal article" date="2015" name="Genome Announc.">
        <title>Complete genome sequence of Anaeromyxobacter sp. Fw109-5, an anaerobic, metal-reducing bacterium isolated from a contaminated subsurface environment.</title>
        <authorList>
            <person name="Hwang C."/>
            <person name="Copeland A."/>
            <person name="Lucas S."/>
            <person name="Lapidus A."/>
            <person name="Barry K."/>
            <person name="Glavina Del Rio T."/>
            <person name="Dalin E."/>
            <person name="Tice H."/>
            <person name="Pitluck S."/>
            <person name="Sims D."/>
            <person name="Brettin T."/>
            <person name="Bruce D.C."/>
            <person name="Detter J.C."/>
            <person name="Han C.S."/>
            <person name="Schmutz J."/>
            <person name="Larimer F.W."/>
            <person name="Land M.L."/>
            <person name="Hauser L.J."/>
            <person name="Kyrpides N."/>
            <person name="Lykidis A."/>
            <person name="Richardson P."/>
            <person name="Belieav A."/>
            <person name="Sanford R.A."/>
            <person name="Loeffler F.E."/>
            <person name="Fields M.W."/>
        </authorList>
    </citation>
    <scope>NUCLEOTIDE SEQUENCE [LARGE SCALE GENOMIC DNA]</scope>
    <source>
        <strain>Fw109-5</strain>
    </source>
</reference>
<accession>A7H9F7</accession>